<organism>
    <name type="scientific">Anaeromyxobacter dehalogenans (strain 2CP-C)</name>
    <dbReference type="NCBI Taxonomy" id="290397"/>
    <lineage>
        <taxon>Bacteria</taxon>
        <taxon>Pseudomonadati</taxon>
        <taxon>Myxococcota</taxon>
        <taxon>Myxococcia</taxon>
        <taxon>Myxococcales</taxon>
        <taxon>Cystobacterineae</taxon>
        <taxon>Anaeromyxobacteraceae</taxon>
        <taxon>Anaeromyxobacter</taxon>
    </lineage>
</organism>
<protein>
    <recommendedName>
        <fullName evidence="1">Nucleoid-associated protein Adeh_3636</fullName>
    </recommendedName>
</protein>
<feature type="chain" id="PRO_1000003679" description="Nucleoid-associated protein Adeh_3636">
    <location>
        <begin position="1"/>
        <end position="103"/>
    </location>
</feature>
<accession>Q2IFP3</accession>
<keyword id="KW-0963">Cytoplasm</keyword>
<keyword id="KW-0238">DNA-binding</keyword>
<keyword id="KW-1185">Reference proteome</keyword>
<dbReference type="EMBL" id="CP000251">
    <property type="protein sequence ID" value="ABC83402.1"/>
    <property type="molecule type" value="Genomic_DNA"/>
</dbReference>
<dbReference type="RefSeq" id="WP_011422684.1">
    <property type="nucleotide sequence ID" value="NC_007760.1"/>
</dbReference>
<dbReference type="SMR" id="Q2IFP3"/>
<dbReference type="STRING" id="290397.Adeh_3636"/>
<dbReference type="KEGG" id="ade:Adeh_3636"/>
<dbReference type="eggNOG" id="COG0718">
    <property type="taxonomic scope" value="Bacteria"/>
</dbReference>
<dbReference type="HOGENOM" id="CLU_140930_2_2_7"/>
<dbReference type="OrthoDB" id="9803080at2"/>
<dbReference type="Proteomes" id="UP000001935">
    <property type="component" value="Chromosome"/>
</dbReference>
<dbReference type="GO" id="GO:0043590">
    <property type="term" value="C:bacterial nucleoid"/>
    <property type="evidence" value="ECO:0007669"/>
    <property type="project" value="UniProtKB-UniRule"/>
</dbReference>
<dbReference type="GO" id="GO:0005829">
    <property type="term" value="C:cytosol"/>
    <property type="evidence" value="ECO:0007669"/>
    <property type="project" value="TreeGrafter"/>
</dbReference>
<dbReference type="GO" id="GO:0003677">
    <property type="term" value="F:DNA binding"/>
    <property type="evidence" value="ECO:0007669"/>
    <property type="project" value="UniProtKB-UniRule"/>
</dbReference>
<dbReference type="Gene3D" id="3.30.1310.10">
    <property type="entry name" value="Nucleoid-associated protein YbaB-like domain"/>
    <property type="match status" value="1"/>
</dbReference>
<dbReference type="HAMAP" id="MF_00274">
    <property type="entry name" value="DNA_YbaB_EbfC"/>
    <property type="match status" value="1"/>
</dbReference>
<dbReference type="InterPro" id="IPR036894">
    <property type="entry name" value="YbaB-like_sf"/>
</dbReference>
<dbReference type="InterPro" id="IPR004401">
    <property type="entry name" value="YbaB/EbfC"/>
</dbReference>
<dbReference type="NCBIfam" id="TIGR00103">
    <property type="entry name" value="DNA_YbaB_EbfC"/>
    <property type="match status" value="1"/>
</dbReference>
<dbReference type="PANTHER" id="PTHR33449">
    <property type="entry name" value="NUCLEOID-ASSOCIATED PROTEIN YBAB"/>
    <property type="match status" value="1"/>
</dbReference>
<dbReference type="PANTHER" id="PTHR33449:SF1">
    <property type="entry name" value="NUCLEOID-ASSOCIATED PROTEIN YBAB"/>
    <property type="match status" value="1"/>
</dbReference>
<dbReference type="Pfam" id="PF02575">
    <property type="entry name" value="YbaB_DNA_bd"/>
    <property type="match status" value="1"/>
</dbReference>
<dbReference type="PIRSF" id="PIRSF004555">
    <property type="entry name" value="UCP004555"/>
    <property type="match status" value="1"/>
</dbReference>
<dbReference type="SUPFAM" id="SSF82607">
    <property type="entry name" value="YbaB-like"/>
    <property type="match status" value="1"/>
</dbReference>
<gene>
    <name type="ordered locus">Adeh_3636</name>
</gene>
<evidence type="ECO:0000255" key="1">
    <source>
        <dbReference type="HAMAP-Rule" id="MF_00274"/>
    </source>
</evidence>
<comment type="function">
    <text evidence="1">Binds to DNA and alters its conformation. May be involved in regulation of gene expression, nucleoid organization and DNA protection.</text>
</comment>
<comment type="subunit">
    <text evidence="1">Homodimer.</text>
</comment>
<comment type="subcellular location">
    <subcellularLocation>
        <location evidence="1">Cytoplasm</location>
        <location evidence="1">Nucleoid</location>
    </subcellularLocation>
</comment>
<comment type="similarity">
    <text evidence="1">Belongs to the YbaB/EbfC family.</text>
</comment>
<reference key="1">
    <citation type="submission" date="2006-01" db="EMBL/GenBank/DDBJ databases">
        <title>Complete sequence of Anaeromyxobacter dehalogenans 2CP-C.</title>
        <authorList>
            <person name="Copeland A."/>
            <person name="Lucas S."/>
            <person name="Lapidus A."/>
            <person name="Barry K."/>
            <person name="Detter J.C."/>
            <person name="Glavina T."/>
            <person name="Hammon N."/>
            <person name="Israni S."/>
            <person name="Pitluck S."/>
            <person name="Brettin T."/>
            <person name="Bruce D."/>
            <person name="Han C."/>
            <person name="Tapia R."/>
            <person name="Gilna P."/>
            <person name="Kiss H."/>
            <person name="Schmutz J."/>
            <person name="Larimer F."/>
            <person name="Land M."/>
            <person name="Kyrpides N."/>
            <person name="Anderson I."/>
            <person name="Sanford R.A."/>
            <person name="Ritalahti K.M."/>
            <person name="Thomas H.S."/>
            <person name="Kirby J.R."/>
            <person name="Zhulin I.B."/>
            <person name="Loeffler F.E."/>
            <person name="Richardson P."/>
        </authorList>
    </citation>
    <scope>NUCLEOTIDE SEQUENCE [LARGE SCALE GENOMIC DNA]</scope>
    <source>
        <strain>2CP-C</strain>
    </source>
</reference>
<sequence>MDIQYLMRQAKKLEKAMADAKEKLAEIAVEAESGGGLVKVAMNGKCEVTRLTVDPKAIDPNDKAMLEDLITAAVNAAVEKARTAADESMSKATGGIKIPGIAG</sequence>
<proteinExistence type="inferred from homology"/>
<name>Y3636_ANADE</name>